<organism>
    <name type="scientific">Verminephrobacter eiseniae (strain EF01-2)</name>
    <dbReference type="NCBI Taxonomy" id="391735"/>
    <lineage>
        <taxon>Bacteria</taxon>
        <taxon>Pseudomonadati</taxon>
        <taxon>Pseudomonadota</taxon>
        <taxon>Betaproteobacteria</taxon>
        <taxon>Burkholderiales</taxon>
        <taxon>Comamonadaceae</taxon>
        <taxon>Verminephrobacter</taxon>
    </lineage>
</organism>
<reference key="1">
    <citation type="submission" date="2006-12" db="EMBL/GenBank/DDBJ databases">
        <title>Complete sequence of chromosome 1 of Verminephrobacter eiseniae EF01-2.</title>
        <authorList>
            <person name="Copeland A."/>
            <person name="Lucas S."/>
            <person name="Lapidus A."/>
            <person name="Barry K."/>
            <person name="Detter J.C."/>
            <person name="Glavina del Rio T."/>
            <person name="Dalin E."/>
            <person name="Tice H."/>
            <person name="Pitluck S."/>
            <person name="Chertkov O."/>
            <person name="Brettin T."/>
            <person name="Bruce D."/>
            <person name="Han C."/>
            <person name="Tapia R."/>
            <person name="Gilna P."/>
            <person name="Schmutz J."/>
            <person name="Larimer F."/>
            <person name="Land M."/>
            <person name="Hauser L."/>
            <person name="Kyrpides N."/>
            <person name="Kim E."/>
            <person name="Stahl D."/>
            <person name="Richardson P."/>
        </authorList>
    </citation>
    <scope>NUCLEOTIDE SEQUENCE [LARGE SCALE GENOMIC DNA]</scope>
    <source>
        <strain>EF01-2</strain>
    </source>
</reference>
<proteinExistence type="inferred from homology"/>
<dbReference type="EC" id="3.4.21.92" evidence="1"/>
<dbReference type="EMBL" id="CP000542">
    <property type="protein sequence ID" value="ABM60074.1"/>
    <property type="molecule type" value="Genomic_DNA"/>
</dbReference>
<dbReference type="RefSeq" id="WP_011812060.1">
    <property type="nucleotide sequence ID" value="NC_008786.1"/>
</dbReference>
<dbReference type="SMR" id="A1WR17"/>
<dbReference type="STRING" id="391735.Veis_4371"/>
<dbReference type="MEROPS" id="S14.001"/>
<dbReference type="GeneID" id="76462686"/>
<dbReference type="KEGG" id="vei:Veis_4371"/>
<dbReference type="eggNOG" id="COG0740">
    <property type="taxonomic scope" value="Bacteria"/>
</dbReference>
<dbReference type="HOGENOM" id="CLU_058707_3_2_4"/>
<dbReference type="OrthoDB" id="9802800at2"/>
<dbReference type="Proteomes" id="UP000000374">
    <property type="component" value="Chromosome"/>
</dbReference>
<dbReference type="GO" id="GO:0005737">
    <property type="term" value="C:cytoplasm"/>
    <property type="evidence" value="ECO:0007669"/>
    <property type="project" value="UniProtKB-SubCell"/>
</dbReference>
<dbReference type="GO" id="GO:0009368">
    <property type="term" value="C:endopeptidase Clp complex"/>
    <property type="evidence" value="ECO:0007669"/>
    <property type="project" value="TreeGrafter"/>
</dbReference>
<dbReference type="GO" id="GO:0004176">
    <property type="term" value="F:ATP-dependent peptidase activity"/>
    <property type="evidence" value="ECO:0007669"/>
    <property type="project" value="InterPro"/>
</dbReference>
<dbReference type="GO" id="GO:0051117">
    <property type="term" value="F:ATPase binding"/>
    <property type="evidence" value="ECO:0007669"/>
    <property type="project" value="TreeGrafter"/>
</dbReference>
<dbReference type="GO" id="GO:0004252">
    <property type="term" value="F:serine-type endopeptidase activity"/>
    <property type="evidence" value="ECO:0007669"/>
    <property type="project" value="UniProtKB-UniRule"/>
</dbReference>
<dbReference type="GO" id="GO:0006515">
    <property type="term" value="P:protein quality control for misfolded or incompletely synthesized proteins"/>
    <property type="evidence" value="ECO:0007669"/>
    <property type="project" value="TreeGrafter"/>
</dbReference>
<dbReference type="CDD" id="cd07017">
    <property type="entry name" value="S14_ClpP_2"/>
    <property type="match status" value="1"/>
</dbReference>
<dbReference type="FunFam" id="3.90.226.10:FF:000001">
    <property type="entry name" value="ATP-dependent Clp protease proteolytic subunit"/>
    <property type="match status" value="1"/>
</dbReference>
<dbReference type="Gene3D" id="3.90.226.10">
    <property type="entry name" value="2-enoyl-CoA Hydratase, Chain A, domain 1"/>
    <property type="match status" value="1"/>
</dbReference>
<dbReference type="HAMAP" id="MF_00444">
    <property type="entry name" value="ClpP"/>
    <property type="match status" value="1"/>
</dbReference>
<dbReference type="InterPro" id="IPR001907">
    <property type="entry name" value="ClpP"/>
</dbReference>
<dbReference type="InterPro" id="IPR029045">
    <property type="entry name" value="ClpP/crotonase-like_dom_sf"/>
</dbReference>
<dbReference type="InterPro" id="IPR023562">
    <property type="entry name" value="ClpP/TepA"/>
</dbReference>
<dbReference type="InterPro" id="IPR033135">
    <property type="entry name" value="ClpP_His_AS"/>
</dbReference>
<dbReference type="NCBIfam" id="TIGR00493">
    <property type="entry name" value="clpP"/>
    <property type="match status" value="1"/>
</dbReference>
<dbReference type="NCBIfam" id="NF001368">
    <property type="entry name" value="PRK00277.1"/>
    <property type="match status" value="1"/>
</dbReference>
<dbReference type="NCBIfam" id="NF009205">
    <property type="entry name" value="PRK12553.1"/>
    <property type="match status" value="1"/>
</dbReference>
<dbReference type="PANTHER" id="PTHR10381">
    <property type="entry name" value="ATP-DEPENDENT CLP PROTEASE PROTEOLYTIC SUBUNIT"/>
    <property type="match status" value="1"/>
</dbReference>
<dbReference type="PANTHER" id="PTHR10381:SF70">
    <property type="entry name" value="ATP-DEPENDENT CLP PROTEASE PROTEOLYTIC SUBUNIT"/>
    <property type="match status" value="1"/>
</dbReference>
<dbReference type="Pfam" id="PF00574">
    <property type="entry name" value="CLP_protease"/>
    <property type="match status" value="1"/>
</dbReference>
<dbReference type="PRINTS" id="PR00127">
    <property type="entry name" value="CLPPROTEASEP"/>
</dbReference>
<dbReference type="SUPFAM" id="SSF52096">
    <property type="entry name" value="ClpP/crotonase"/>
    <property type="match status" value="1"/>
</dbReference>
<dbReference type="PROSITE" id="PS00382">
    <property type="entry name" value="CLP_PROTEASE_HIS"/>
    <property type="match status" value="1"/>
</dbReference>
<comment type="function">
    <text evidence="1">Cleaves peptides in various proteins in a process that requires ATP hydrolysis. Has a chymotrypsin-like activity. Plays a major role in the degradation of misfolded proteins.</text>
</comment>
<comment type="catalytic activity">
    <reaction evidence="1">
        <text>Hydrolysis of proteins to small peptides in the presence of ATP and magnesium. alpha-casein is the usual test substrate. In the absence of ATP, only oligopeptides shorter than five residues are hydrolyzed (such as succinyl-Leu-Tyr-|-NHMec, and Leu-Tyr-Leu-|-Tyr-Trp, in which cleavage of the -Tyr-|-Leu- and -Tyr-|-Trp bonds also occurs).</text>
        <dbReference type="EC" id="3.4.21.92"/>
    </reaction>
</comment>
<comment type="subunit">
    <text evidence="1">Fourteen ClpP subunits assemble into 2 heptameric rings which stack back to back to give a disk-like structure with a central cavity, resembling the structure of eukaryotic proteasomes.</text>
</comment>
<comment type="subcellular location">
    <subcellularLocation>
        <location evidence="1">Cytoplasm</location>
    </subcellularLocation>
</comment>
<comment type="similarity">
    <text evidence="1">Belongs to the peptidase S14 family.</text>
</comment>
<sequence length="202" mass="22365">MNALETQGLGMIPMVIEQSGRGERSYDIYSRLLKERVIFLVGPVNDQTANLVVAQLLFLESENPDKDISFYINSPGGSVSAGMAIFDTMNFIKPDVSTLCTGMAASMGAFLLAAGAKGKRFALPNSKVMIHQPLGGMQGQATEIEIHAREILKTREQLNKILAERTGQPLEKIQRDTERDYFLSADESREYGLVDQVIHRRS</sequence>
<gene>
    <name evidence="1" type="primary">clpP</name>
    <name type="ordered locus">Veis_4371</name>
</gene>
<keyword id="KW-0963">Cytoplasm</keyword>
<keyword id="KW-0378">Hydrolase</keyword>
<keyword id="KW-0645">Protease</keyword>
<keyword id="KW-1185">Reference proteome</keyword>
<keyword id="KW-0720">Serine protease</keyword>
<feature type="chain" id="PRO_1000026143" description="ATP-dependent Clp protease proteolytic subunit">
    <location>
        <begin position="1"/>
        <end position="202"/>
    </location>
</feature>
<feature type="active site" description="Nucleophile" evidence="1">
    <location>
        <position position="106"/>
    </location>
</feature>
<feature type="active site" evidence="1">
    <location>
        <position position="131"/>
    </location>
</feature>
<accession>A1WR17</accession>
<name>CLPP_VEREI</name>
<protein>
    <recommendedName>
        <fullName evidence="1">ATP-dependent Clp protease proteolytic subunit</fullName>
        <ecNumber evidence="1">3.4.21.92</ecNumber>
    </recommendedName>
    <alternativeName>
        <fullName evidence="1">Endopeptidase Clp</fullName>
    </alternativeName>
</protein>
<evidence type="ECO:0000255" key="1">
    <source>
        <dbReference type="HAMAP-Rule" id="MF_00444"/>
    </source>
</evidence>